<dbReference type="EC" id="3.2.2.23" evidence="2"/>
<dbReference type="EC" id="4.2.99.18" evidence="2"/>
<dbReference type="EMBL" id="AP006840">
    <property type="protein sequence ID" value="BAD39834.1"/>
    <property type="molecule type" value="Genomic_DNA"/>
</dbReference>
<dbReference type="RefSeq" id="WP_011194981.1">
    <property type="nucleotide sequence ID" value="NC_006177.1"/>
</dbReference>
<dbReference type="SMR" id="Q67R59"/>
<dbReference type="STRING" id="292459.STH849"/>
<dbReference type="KEGG" id="sth:STH849"/>
<dbReference type="eggNOG" id="COG0266">
    <property type="taxonomic scope" value="Bacteria"/>
</dbReference>
<dbReference type="HOGENOM" id="CLU_038423_1_2_9"/>
<dbReference type="OrthoDB" id="9800855at2"/>
<dbReference type="Proteomes" id="UP000000417">
    <property type="component" value="Chromosome"/>
</dbReference>
<dbReference type="GO" id="GO:0034039">
    <property type="term" value="F:8-oxo-7,8-dihydroguanine DNA N-glycosylase activity"/>
    <property type="evidence" value="ECO:0007669"/>
    <property type="project" value="TreeGrafter"/>
</dbReference>
<dbReference type="GO" id="GO:0140078">
    <property type="term" value="F:class I DNA-(apurinic or apyrimidinic site) endonuclease activity"/>
    <property type="evidence" value="ECO:0007669"/>
    <property type="project" value="UniProtKB-EC"/>
</dbReference>
<dbReference type="GO" id="GO:0003684">
    <property type="term" value="F:damaged DNA binding"/>
    <property type="evidence" value="ECO:0007669"/>
    <property type="project" value="InterPro"/>
</dbReference>
<dbReference type="GO" id="GO:0008270">
    <property type="term" value="F:zinc ion binding"/>
    <property type="evidence" value="ECO:0007669"/>
    <property type="project" value="UniProtKB-UniRule"/>
</dbReference>
<dbReference type="GO" id="GO:0006284">
    <property type="term" value="P:base-excision repair"/>
    <property type="evidence" value="ECO:0007669"/>
    <property type="project" value="InterPro"/>
</dbReference>
<dbReference type="CDD" id="cd08966">
    <property type="entry name" value="EcFpg-like_N"/>
    <property type="match status" value="1"/>
</dbReference>
<dbReference type="FunFam" id="1.10.8.50:FF:000003">
    <property type="entry name" value="Formamidopyrimidine-DNA glycosylase"/>
    <property type="match status" value="1"/>
</dbReference>
<dbReference type="Gene3D" id="1.10.8.50">
    <property type="match status" value="1"/>
</dbReference>
<dbReference type="Gene3D" id="3.20.190.10">
    <property type="entry name" value="MutM-like, N-terminal"/>
    <property type="match status" value="1"/>
</dbReference>
<dbReference type="HAMAP" id="MF_00103">
    <property type="entry name" value="Fapy_DNA_glycosyl"/>
    <property type="match status" value="1"/>
</dbReference>
<dbReference type="InterPro" id="IPR015886">
    <property type="entry name" value="DNA_glyclase/AP_lyase_DNA-bd"/>
</dbReference>
<dbReference type="InterPro" id="IPR015887">
    <property type="entry name" value="DNA_glyclase_Znf_dom_DNA_BS"/>
</dbReference>
<dbReference type="InterPro" id="IPR020629">
    <property type="entry name" value="Formamido-pyr_DNA_Glyclase"/>
</dbReference>
<dbReference type="InterPro" id="IPR012319">
    <property type="entry name" value="FPG_cat"/>
</dbReference>
<dbReference type="InterPro" id="IPR035937">
    <property type="entry name" value="MutM-like_N-ter"/>
</dbReference>
<dbReference type="InterPro" id="IPR010979">
    <property type="entry name" value="Ribosomal_uS13-like_H2TH"/>
</dbReference>
<dbReference type="InterPro" id="IPR000214">
    <property type="entry name" value="Znf_DNA_glyclase/AP_lyase"/>
</dbReference>
<dbReference type="InterPro" id="IPR010663">
    <property type="entry name" value="Znf_FPG/IleRS"/>
</dbReference>
<dbReference type="NCBIfam" id="TIGR00577">
    <property type="entry name" value="fpg"/>
    <property type="match status" value="1"/>
</dbReference>
<dbReference type="NCBIfam" id="NF002211">
    <property type="entry name" value="PRK01103.1"/>
    <property type="match status" value="1"/>
</dbReference>
<dbReference type="PANTHER" id="PTHR22993">
    <property type="entry name" value="FORMAMIDOPYRIMIDINE-DNA GLYCOSYLASE"/>
    <property type="match status" value="1"/>
</dbReference>
<dbReference type="PANTHER" id="PTHR22993:SF9">
    <property type="entry name" value="FORMAMIDOPYRIMIDINE-DNA GLYCOSYLASE"/>
    <property type="match status" value="1"/>
</dbReference>
<dbReference type="Pfam" id="PF01149">
    <property type="entry name" value="Fapy_DNA_glyco"/>
    <property type="match status" value="1"/>
</dbReference>
<dbReference type="Pfam" id="PF06831">
    <property type="entry name" value="H2TH"/>
    <property type="match status" value="1"/>
</dbReference>
<dbReference type="Pfam" id="PF06827">
    <property type="entry name" value="zf-FPG_IleRS"/>
    <property type="match status" value="1"/>
</dbReference>
<dbReference type="SMART" id="SM00898">
    <property type="entry name" value="Fapy_DNA_glyco"/>
    <property type="match status" value="1"/>
</dbReference>
<dbReference type="SMART" id="SM01232">
    <property type="entry name" value="H2TH"/>
    <property type="match status" value="1"/>
</dbReference>
<dbReference type="SUPFAM" id="SSF57716">
    <property type="entry name" value="Glucocorticoid receptor-like (DNA-binding domain)"/>
    <property type="match status" value="1"/>
</dbReference>
<dbReference type="SUPFAM" id="SSF81624">
    <property type="entry name" value="N-terminal domain of MutM-like DNA repair proteins"/>
    <property type="match status" value="1"/>
</dbReference>
<dbReference type="SUPFAM" id="SSF46946">
    <property type="entry name" value="S13-like H2TH domain"/>
    <property type="match status" value="1"/>
</dbReference>
<dbReference type="PROSITE" id="PS51068">
    <property type="entry name" value="FPG_CAT"/>
    <property type="match status" value="1"/>
</dbReference>
<dbReference type="PROSITE" id="PS01242">
    <property type="entry name" value="ZF_FPG_1"/>
    <property type="match status" value="1"/>
</dbReference>
<dbReference type="PROSITE" id="PS51066">
    <property type="entry name" value="ZF_FPG_2"/>
    <property type="match status" value="1"/>
</dbReference>
<accession>Q67R59</accession>
<feature type="initiator methionine" description="Removed" evidence="1">
    <location>
        <position position="1"/>
    </location>
</feature>
<feature type="chain" id="PRO_0000228477" description="Formamidopyrimidine-DNA glycosylase">
    <location>
        <begin position="2"/>
        <end position="305"/>
    </location>
</feature>
<feature type="zinc finger region" description="FPG-type" evidence="2">
    <location>
        <begin position="239"/>
        <end position="273"/>
    </location>
</feature>
<feature type="region of interest" description="Disordered" evidence="3">
    <location>
        <begin position="282"/>
        <end position="305"/>
    </location>
</feature>
<feature type="active site" description="Schiff-base intermediate with DNA" evidence="2">
    <location>
        <position position="2"/>
    </location>
</feature>
<feature type="active site" description="Proton donor" evidence="2">
    <location>
        <position position="3"/>
    </location>
</feature>
<feature type="active site" description="Proton donor; for beta-elimination activity" evidence="2">
    <location>
        <position position="59"/>
    </location>
</feature>
<feature type="active site" description="Proton donor; for delta-elimination activity" evidence="2">
    <location>
        <position position="263"/>
    </location>
</feature>
<feature type="binding site" evidence="2">
    <location>
        <position position="92"/>
    </location>
    <ligand>
        <name>DNA</name>
        <dbReference type="ChEBI" id="CHEBI:16991"/>
    </ligand>
</feature>
<feature type="binding site" evidence="2">
    <location>
        <position position="111"/>
    </location>
    <ligand>
        <name>DNA</name>
        <dbReference type="ChEBI" id="CHEBI:16991"/>
    </ligand>
</feature>
<feature type="binding site" evidence="2">
    <location>
        <position position="154"/>
    </location>
    <ligand>
        <name>DNA</name>
        <dbReference type="ChEBI" id="CHEBI:16991"/>
    </ligand>
</feature>
<gene>
    <name evidence="2" type="primary">mutM</name>
    <name evidence="2" type="synonym">fpg</name>
    <name type="ordered locus">STH849</name>
</gene>
<comment type="function">
    <text evidence="2">Involved in base excision repair of DNA damaged by oxidation or by mutagenic agents. Acts as a DNA glycosylase that recognizes and removes damaged bases. Has a preference for oxidized purines, such as 7,8-dihydro-8-oxoguanine (8-oxoG). Has AP (apurinic/apyrimidinic) lyase activity and introduces nicks in the DNA strand. Cleaves the DNA backbone by beta-delta elimination to generate a single-strand break at the site of the removed base with both 3'- and 5'-phosphates.</text>
</comment>
<comment type="catalytic activity">
    <reaction evidence="2">
        <text>Hydrolysis of DNA containing ring-opened 7-methylguanine residues, releasing 2,6-diamino-4-hydroxy-5-(N-methyl)formamidopyrimidine.</text>
        <dbReference type="EC" id="3.2.2.23"/>
    </reaction>
</comment>
<comment type="catalytic activity">
    <reaction evidence="2">
        <text>2'-deoxyribonucleotide-(2'-deoxyribose 5'-phosphate)-2'-deoxyribonucleotide-DNA = a 3'-end 2'-deoxyribonucleotide-(2,3-dehydro-2,3-deoxyribose 5'-phosphate)-DNA + a 5'-end 5'-phospho-2'-deoxyribonucleoside-DNA + H(+)</text>
        <dbReference type="Rhea" id="RHEA:66592"/>
        <dbReference type="Rhea" id="RHEA-COMP:13180"/>
        <dbReference type="Rhea" id="RHEA-COMP:16897"/>
        <dbReference type="Rhea" id="RHEA-COMP:17067"/>
        <dbReference type="ChEBI" id="CHEBI:15378"/>
        <dbReference type="ChEBI" id="CHEBI:136412"/>
        <dbReference type="ChEBI" id="CHEBI:157695"/>
        <dbReference type="ChEBI" id="CHEBI:167181"/>
        <dbReference type="EC" id="4.2.99.18"/>
    </reaction>
</comment>
<comment type="cofactor">
    <cofactor evidence="2">
        <name>Zn(2+)</name>
        <dbReference type="ChEBI" id="CHEBI:29105"/>
    </cofactor>
    <text evidence="2">Binds 1 zinc ion per subunit.</text>
</comment>
<comment type="subunit">
    <text evidence="2">Monomer.</text>
</comment>
<comment type="similarity">
    <text evidence="2">Belongs to the FPG family.</text>
</comment>
<reference key="1">
    <citation type="journal article" date="2004" name="Nucleic Acids Res.">
        <title>Genome sequence of Symbiobacterium thermophilum, an uncultivable bacterium that depends on microbial commensalism.</title>
        <authorList>
            <person name="Ueda K."/>
            <person name="Yamashita A."/>
            <person name="Ishikawa J."/>
            <person name="Shimada M."/>
            <person name="Watsuji T."/>
            <person name="Morimura K."/>
            <person name="Ikeda H."/>
            <person name="Hattori M."/>
            <person name="Beppu T."/>
        </authorList>
    </citation>
    <scope>NUCLEOTIDE SEQUENCE [LARGE SCALE GENOMIC DNA]</scope>
    <source>
        <strain>DSM 24528 / JCM 14929 / IAM 14863 / T</strain>
    </source>
</reference>
<organism>
    <name type="scientific">Symbiobacterium thermophilum (strain DSM 24528 / JCM 14929 / IAM 14863 / T)</name>
    <dbReference type="NCBI Taxonomy" id="292459"/>
    <lineage>
        <taxon>Bacteria</taxon>
        <taxon>Bacillati</taxon>
        <taxon>Bacillota</taxon>
        <taxon>Clostridia</taxon>
        <taxon>Eubacteriales</taxon>
        <taxon>Symbiobacteriaceae</taxon>
        <taxon>Symbiobacterium</taxon>
    </lineage>
</organism>
<keyword id="KW-0227">DNA damage</keyword>
<keyword id="KW-0234">DNA repair</keyword>
<keyword id="KW-0238">DNA-binding</keyword>
<keyword id="KW-0326">Glycosidase</keyword>
<keyword id="KW-0378">Hydrolase</keyword>
<keyword id="KW-0456">Lyase</keyword>
<keyword id="KW-0479">Metal-binding</keyword>
<keyword id="KW-0511">Multifunctional enzyme</keyword>
<keyword id="KW-1185">Reference proteome</keyword>
<keyword id="KW-0862">Zinc</keyword>
<keyword id="KW-0863">Zinc-finger</keyword>
<evidence type="ECO:0000250" key="1"/>
<evidence type="ECO:0000255" key="2">
    <source>
        <dbReference type="HAMAP-Rule" id="MF_00103"/>
    </source>
</evidence>
<evidence type="ECO:0000256" key="3">
    <source>
        <dbReference type="SAM" id="MobiDB-lite"/>
    </source>
</evidence>
<protein>
    <recommendedName>
        <fullName evidence="2">Formamidopyrimidine-DNA glycosylase</fullName>
        <shortName evidence="2">Fapy-DNA glycosylase</shortName>
        <ecNumber evidence="2">3.2.2.23</ecNumber>
    </recommendedName>
    <alternativeName>
        <fullName evidence="2">DNA-(apurinic or apyrimidinic site) lyase MutM</fullName>
        <shortName evidence="2">AP lyase MutM</shortName>
        <ecNumber evidence="2">4.2.99.18</ecNumber>
    </alternativeName>
</protein>
<sequence length="305" mass="33684">MPELPEVETVRRTLCPRVVGRRIRRVEILTPRQIYHPDPATFAADLEGAVFDDIERRGKYLLFRLGPRILVAHLRMSGHLYVCGPEAPRPRHLHVVFHLDDGGELRYADQRKFGGFHLLGPGGEGMPPGLANLGPEPLSPEFTPQVLAERLAGRHTSIKAALLNQALVAGLGNIYADEALFCARIHPAREAGSLTPAEVERLHGCIRRVLLRAVERRGTTFSLYRDGEGNEGDMYDELQVFDRAGEPCPVCGTPIRKVAVAQRGTHFCPRCQPVPEGVALSPRRARPGRRGNSVRVAAEPPGTYE</sequence>
<proteinExistence type="inferred from homology"/>
<name>FPG_SYMTH</name>